<keyword id="KW-0997">Cell inner membrane</keyword>
<keyword id="KW-1003">Cell membrane</keyword>
<keyword id="KW-0407">Ion channel</keyword>
<keyword id="KW-0406">Ion transport</keyword>
<keyword id="KW-0472">Membrane</keyword>
<keyword id="KW-0479">Metal-binding</keyword>
<keyword id="KW-1185">Reference proteome</keyword>
<keyword id="KW-0915">Sodium</keyword>
<keyword id="KW-0812">Transmembrane</keyword>
<keyword id="KW-1133">Transmembrane helix</keyword>
<keyword id="KW-0813">Transport</keyword>
<organism>
    <name type="scientific">Cereibacter sphaeroides (strain ATCC 17023 / DSM 158 / JCM 6121 / CCUG 31486 / LMG 2827 / NBRC 12203 / NCIMB 8253 / ATH 2.4.1.)</name>
    <name type="common">Rhodobacter sphaeroides</name>
    <dbReference type="NCBI Taxonomy" id="272943"/>
    <lineage>
        <taxon>Bacteria</taxon>
        <taxon>Pseudomonadati</taxon>
        <taxon>Pseudomonadota</taxon>
        <taxon>Alphaproteobacteria</taxon>
        <taxon>Rhodobacterales</taxon>
        <taxon>Paracoccaceae</taxon>
        <taxon>Cereibacter</taxon>
    </lineage>
</organism>
<protein>
    <recommendedName>
        <fullName evidence="1">Fluoride-specific ion channel FluC</fullName>
    </recommendedName>
</protein>
<gene>
    <name evidence="1" type="primary">fluC</name>
    <name evidence="1" type="synonym">crcB</name>
    <name type="ordered locus">RHOS4_03230</name>
    <name type="ordered locus">RSP_1744</name>
</gene>
<feature type="chain" id="PRO_0000252924" description="Fluoride-specific ion channel FluC">
    <location>
        <begin position="1"/>
        <end position="124"/>
    </location>
</feature>
<feature type="transmembrane region" description="Helical" evidence="1">
    <location>
        <begin position="36"/>
        <end position="56"/>
    </location>
</feature>
<feature type="transmembrane region" description="Helical" evidence="1">
    <location>
        <begin position="63"/>
        <end position="83"/>
    </location>
</feature>
<feature type="transmembrane region" description="Helical" evidence="1">
    <location>
        <begin position="99"/>
        <end position="119"/>
    </location>
</feature>
<feature type="binding site" evidence="1">
    <location>
        <position position="73"/>
    </location>
    <ligand>
        <name>Na(+)</name>
        <dbReference type="ChEBI" id="CHEBI:29101"/>
        <note>structural</note>
    </ligand>
</feature>
<feature type="binding site" evidence="1">
    <location>
        <position position="76"/>
    </location>
    <ligand>
        <name>Na(+)</name>
        <dbReference type="ChEBI" id="CHEBI:29101"/>
        <note>structural</note>
    </ligand>
</feature>
<accession>Q3J5P3</accession>
<evidence type="ECO:0000255" key="1">
    <source>
        <dbReference type="HAMAP-Rule" id="MF_00454"/>
    </source>
</evidence>
<dbReference type="EMBL" id="CP000143">
    <property type="protein sequence ID" value="ABA77891.1"/>
    <property type="molecule type" value="Genomic_DNA"/>
</dbReference>
<dbReference type="RefSeq" id="WP_009563665.1">
    <property type="nucleotide sequence ID" value="NZ_CP030271.1"/>
</dbReference>
<dbReference type="RefSeq" id="YP_351792.1">
    <property type="nucleotide sequence ID" value="NC_007493.2"/>
</dbReference>
<dbReference type="SMR" id="Q3J5P3"/>
<dbReference type="STRING" id="272943.RSP_1744"/>
<dbReference type="EnsemblBacteria" id="ABA77891">
    <property type="protein sequence ID" value="ABA77891"/>
    <property type="gene ID" value="RSP_1744"/>
</dbReference>
<dbReference type="GeneID" id="67445529"/>
<dbReference type="KEGG" id="rsp:RSP_1744"/>
<dbReference type="PATRIC" id="fig|272943.9.peg.622"/>
<dbReference type="eggNOG" id="COG0239">
    <property type="taxonomic scope" value="Bacteria"/>
</dbReference>
<dbReference type="OrthoDB" id="9806299at2"/>
<dbReference type="PhylomeDB" id="Q3J5P3"/>
<dbReference type="Proteomes" id="UP000002703">
    <property type="component" value="Chromosome 1"/>
</dbReference>
<dbReference type="GO" id="GO:0005886">
    <property type="term" value="C:plasma membrane"/>
    <property type="evidence" value="ECO:0007669"/>
    <property type="project" value="UniProtKB-SubCell"/>
</dbReference>
<dbReference type="GO" id="GO:0062054">
    <property type="term" value="F:fluoride channel activity"/>
    <property type="evidence" value="ECO:0007669"/>
    <property type="project" value="UniProtKB-UniRule"/>
</dbReference>
<dbReference type="GO" id="GO:0046872">
    <property type="term" value="F:metal ion binding"/>
    <property type="evidence" value="ECO:0007669"/>
    <property type="project" value="UniProtKB-KW"/>
</dbReference>
<dbReference type="GO" id="GO:0140114">
    <property type="term" value="P:cellular detoxification of fluoride"/>
    <property type="evidence" value="ECO:0007669"/>
    <property type="project" value="UniProtKB-UniRule"/>
</dbReference>
<dbReference type="HAMAP" id="MF_00454">
    <property type="entry name" value="FluC"/>
    <property type="match status" value="1"/>
</dbReference>
<dbReference type="InterPro" id="IPR003691">
    <property type="entry name" value="FluC"/>
</dbReference>
<dbReference type="NCBIfam" id="NF010791">
    <property type="entry name" value="PRK14195.1"/>
    <property type="match status" value="1"/>
</dbReference>
<dbReference type="NCBIfam" id="NF010805">
    <property type="entry name" value="PRK14209.1"/>
    <property type="match status" value="1"/>
</dbReference>
<dbReference type="PANTHER" id="PTHR28259">
    <property type="entry name" value="FLUORIDE EXPORT PROTEIN 1-RELATED"/>
    <property type="match status" value="1"/>
</dbReference>
<dbReference type="PANTHER" id="PTHR28259:SF1">
    <property type="entry name" value="FLUORIDE EXPORT PROTEIN 1-RELATED"/>
    <property type="match status" value="1"/>
</dbReference>
<dbReference type="Pfam" id="PF02537">
    <property type="entry name" value="CRCB"/>
    <property type="match status" value="1"/>
</dbReference>
<proteinExistence type="inferred from homology"/>
<reference key="1">
    <citation type="submission" date="2005-09" db="EMBL/GenBank/DDBJ databases">
        <title>Complete sequence of chromosome 1 of Rhodobacter sphaeroides 2.4.1.</title>
        <authorList>
            <person name="Copeland A."/>
            <person name="Lucas S."/>
            <person name="Lapidus A."/>
            <person name="Barry K."/>
            <person name="Detter J.C."/>
            <person name="Glavina T."/>
            <person name="Hammon N."/>
            <person name="Israni S."/>
            <person name="Pitluck S."/>
            <person name="Richardson P."/>
            <person name="Mackenzie C."/>
            <person name="Choudhary M."/>
            <person name="Larimer F."/>
            <person name="Hauser L.J."/>
            <person name="Land M."/>
            <person name="Donohue T.J."/>
            <person name="Kaplan S."/>
        </authorList>
    </citation>
    <scope>NUCLEOTIDE SEQUENCE [LARGE SCALE GENOMIC DNA]</scope>
    <source>
        <strain>ATCC 17023 / DSM 158 / JCM 6121 / CCUG 31486 / LMG 2827 / NBRC 12203 / NCIMB 8253 / ATH 2.4.1.</strain>
    </source>
</reference>
<comment type="function">
    <text evidence="1">Fluoride-specific ion channel. Important for reducing fluoride concentration in the cell, thus reducing its toxicity.</text>
</comment>
<comment type="catalytic activity">
    <reaction evidence="1">
        <text>fluoride(in) = fluoride(out)</text>
        <dbReference type="Rhea" id="RHEA:76159"/>
        <dbReference type="ChEBI" id="CHEBI:17051"/>
    </reaction>
    <physiologicalReaction direction="left-to-right" evidence="1">
        <dbReference type="Rhea" id="RHEA:76160"/>
    </physiologicalReaction>
</comment>
<comment type="activity regulation">
    <text evidence="1">Na(+) is not transported, but it plays an essential structural role and its presence is essential for fluoride channel function.</text>
</comment>
<comment type="subcellular location">
    <subcellularLocation>
        <location evidence="1">Cell inner membrane</location>
        <topology evidence="1">Multi-pass membrane protein</topology>
    </subcellularLocation>
</comment>
<comment type="similarity">
    <text evidence="1">Belongs to the fluoride channel Fluc/FEX (TC 1.A.43) family.</text>
</comment>
<name>FLUC_CERS4</name>
<sequence>MISSLLQVALGGALGASARYLTNVGSMRLFGPAFPVGTMIVNVVGSFLMGVLVVVLAHKGNRYAPFLMTGMLGGFTTFSAFSLDAVTLYERGQAGLAAAYVGLSVGLSLAGLMAGMAAVRGWMA</sequence>